<sequence length="520" mass="58384">MSGKCDVVVVGGGISGMAAAKLLHDFGLNVVVLEARDRVGGRTYTIRNQKVKYLDLGGSYVGPTQNCILRLAKELGLETYKVNEVERLIHHVKGKSYPFRGPFPPVWNPIAYLDHNNLWRTMDDMGREIPSDAPWKAPLAEEWDHMTMKELLDKICWTESAKQLATLFVNLCVTAETHEVSALWFLWYVKQCGGTTRIISTTNGGQERKFVGGSGQVSERIMDLLGDQVKLERPVTHIDQTGENVLVETLNHEVYEAKYVISAIPPTLGMKIHFNPPLPMMRNQLITRVPLGSVIKCIVYYKEPFWRKKDYCGTMIIEGEEAPIAYTLDDTKPDGNYAAIMGFILAHKARKLARLTKDERMKKLCELYAKVLGSQEALQPVHYEEKNWCEEQYSGGCYTTYFPPGIMTQYGRVLRQPVGRIYFAGTETATHWSGYMEGAVEAGERAAREILHAMGKIPEDEIWQSEPESVDVPAQPITTTFLERHLPSVPGLLRLIGLTAIFSATALGVLAHKRGLLVRV</sequence>
<name>AOFB_CANLF</name>
<dbReference type="EC" id="1.4.3.21" evidence="3"/>
<dbReference type="EC" id="1.4.3.4" evidence="3"/>
<dbReference type="EMBL" id="AB070958">
    <property type="protein sequence ID" value="BAB86936.1"/>
    <property type="molecule type" value="mRNA"/>
</dbReference>
<dbReference type="RefSeq" id="NP_001002970.3">
    <property type="nucleotide sequence ID" value="NM_001002970.3"/>
</dbReference>
<dbReference type="SMR" id="Q7YRB7"/>
<dbReference type="FunCoup" id="Q7YRB7">
    <property type="interactions" value="25"/>
</dbReference>
<dbReference type="STRING" id="9615.ENSCAFP00000021330"/>
<dbReference type="PaxDb" id="9612-ENSCAFP00000021330"/>
<dbReference type="Ensembl" id="ENSCAFT00000022963.5">
    <property type="protein sequence ID" value="ENSCAFP00000021330.4"/>
    <property type="gene ID" value="ENSCAFG00000014451.5"/>
</dbReference>
<dbReference type="Ensembl" id="ENSCAFT00845048615.1">
    <property type="protein sequence ID" value="ENSCAFP00845038135.1"/>
    <property type="gene ID" value="ENSCAFG00845027440.1"/>
</dbReference>
<dbReference type="GeneID" id="403451"/>
<dbReference type="KEGG" id="cfa:403451"/>
<dbReference type="CTD" id="4129"/>
<dbReference type="VEuPathDB" id="HostDB:ENSCAFG00845027440"/>
<dbReference type="VGNC" id="VGNC:42954">
    <property type="gene designation" value="MAOB"/>
</dbReference>
<dbReference type="eggNOG" id="KOG0029">
    <property type="taxonomic scope" value="Eukaryota"/>
</dbReference>
<dbReference type="GeneTree" id="ENSGT00940000161545"/>
<dbReference type="InParanoid" id="Q7YRB7"/>
<dbReference type="OrthoDB" id="7777654at2759"/>
<dbReference type="Reactome" id="R-CFA-141333">
    <property type="pathway name" value="Biogenic amines are oxidatively deaminated to aldehydes by MAOA and MAOB"/>
</dbReference>
<dbReference type="Proteomes" id="UP000002254">
    <property type="component" value="Chromosome X"/>
</dbReference>
<dbReference type="Proteomes" id="UP000694429">
    <property type="component" value="Unplaced"/>
</dbReference>
<dbReference type="Proteomes" id="UP000694542">
    <property type="component" value="Unplaced"/>
</dbReference>
<dbReference type="Proteomes" id="UP000805418">
    <property type="component" value="Chromosome X"/>
</dbReference>
<dbReference type="GO" id="GO:0005741">
    <property type="term" value="C:mitochondrial outer membrane"/>
    <property type="evidence" value="ECO:0007669"/>
    <property type="project" value="UniProtKB-SubCell"/>
</dbReference>
<dbReference type="GO" id="GO:0005739">
    <property type="term" value="C:mitochondrion"/>
    <property type="evidence" value="ECO:0000250"/>
    <property type="project" value="UniProtKB"/>
</dbReference>
<dbReference type="GO" id="GO:0097621">
    <property type="term" value="F:monoamine oxidase activity"/>
    <property type="evidence" value="ECO:0000250"/>
    <property type="project" value="UniProtKB"/>
</dbReference>
<dbReference type="GO" id="GO:0008131">
    <property type="term" value="F:primary methylamine oxidase activity"/>
    <property type="evidence" value="ECO:0000250"/>
    <property type="project" value="UniProtKB"/>
</dbReference>
<dbReference type="FunFam" id="1.10.405.10:FF:000005">
    <property type="entry name" value="Amine oxidase [flavin-containing]"/>
    <property type="match status" value="1"/>
</dbReference>
<dbReference type="Gene3D" id="3.90.660.10">
    <property type="match status" value="1"/>
</dbReference>
<dbReference type="Gene3D" id="6.10.250.130">
    <property type="match status" value="1"/>
</dbReference>
<dbReference type="Gene3D" id="3.50.50.60">
    <property type="entry name" value="FAD/NAD(P)-binding domain"/>
    <property type="match status" value="1"/>
</dbReference>
<dbReference type="Gene3D" id="1.10.405.10">
    <property type="entry name" value="Guanine Nucleotide Dissociation Inhibitor, domain 1"/>
    <property type="match status" value="1"/>
</dbReference>
<dbReference type="InterPro" id="IPR002937">
    <property type="entry name" value="Amino_oxidase"/>
</dbReference>
<dbReference type="InterPro" id="IPR036188">
    <property type="entry name" value="FAD/NAD-bd_sf"/>
</dbReference>
<dbReference type="InterPro" id="IPR001613">
    <property type="entry name" value="Flavin_amine_oxidase"/>
</dbReference>
<dbReference type="InterPro" id="IPR050703">
    <property type="entry name" value="Flavin_MAO"/>
</dbReference>
<dbReference type="PANTHER" id="PTHR43563">
    <property type="entry name" value="AMINE OXIDASE"/>
    <property type="match status" value="1"/>
</dbReference>
<dbReference type="PANTHER" id="PTHR43563:SF1">
    <property type="entry name" value="AMINE OXIDASE [FLAVIN-CONTAINING] B"/>
    <property type="match status" value="1"/>
</dbReference>
<dbReference type="Pfam" id="PF01593">
    <property type="entry name" value="Amino_oxidase"/>
    <property type="match status" value="1"/>
</dbReference>
<dbReference type="PRINTS" id="PR00757">
    <property type="entry name" value="AMINEOXDASEF"/>
</dbReference>
<dbReference type="SUPFAM" id="SSF54373">
    <property type="entry name" value="FAD-linked reductases, C-terminal domain"/>
    <property type="match status" value="1"/>
</dbReference>
<dbReference type="SUPFAM" id="SSF51905">
    <property type="entry name" value="FAD/NAD(P)-binding domain"/>
    <property type="match status" value="1"/>
</dbReference>
<proteinExistence type="evidence at transcript level"/>
<keyword id="KW-0007">Acetylation</keyword>
<keyword id="KW-0274">FAD</keyword>
<keyword id="KW-0285">Flavoprotein</keyword>
<keyword id="KW-0472">Membrane</keyword>
<keyword id="KW-0496">Mitochondrion</keyword>
<keyword id="KW-1000">Mitochondrion outer membrane</keyword>
<keyword id="KW-0560">Oxidoreductase</keyword>
<keyword id="KW-1185">Reference proteome</keyword>
<keyword id="KW-0812">Transmembrane</keyword>
<keyword id="KW-1133">Transmembrane helix</keyword>
<accession>Q7YRB7</accession>
<organism>
    <name type="scientific">Canis lupus familiaris</name>
    <name type="common">Dog</name>
    <name type="synonym">Canis familiaris</name>
    <dbReference type="NCBI Taxonomy" id="9615"/>
    <lineage>
        <taxon>Eukaryota</taxon>
        <taxon>Metazoa</taxon>
        <taxon>Chordata</taxon>
        <taxon>Craniata</taxon>
        <taxon>Vertebrata</taxon>
        <taxon>Euteleostomi</taxon>
        <taxon>Mammalia</taxon>
        <taxon>Eutheria</taxon>
        <taxon>Laurasiatheria</taxon>
        <taxon>Carnivora</taxon>
        <taxon>Caniformia</taxon>
        <taxon>Canidae</taxon>
        <taxon>Canis</taxon>
    </lineage>
</organism>
<feature type="initiator methionine" description="Removed" evidence="4">
    <location>
        <position position="1"/>
    </location>
</feature>
<feature type="chain" id="PRO_0000099857" description="Amine oxidase [flavin-containing] B">
    <location>
        <begin position="2"/>
        <end position="520"/>
    </location>
</feature>
<feature type="topological domain" description="Cytoplasmic" evidence="1">
    <location>
        <begin position="2"/>
        <end position="489"/>
    </location>
</feature>
<feature type="transmembrane region" description="Helical; Anchor for type IV membrane protein" evidence="1">
    <location>
        <begin position="490"/>
        <end position="516"/>
    </location>
</feature>
<feature type="topological domain" description="Mitochondrial intermembrane" evidence="1">
    <location>
        <begin position="517"/>
        <end position="520"/>
    </location>
</feature>
<feature type="site" description="Important for catalytic activity" evidence="1">
    <location>
        <position position="156"/>
    </location>
</feature>
<feature type="site" description="Important for catalytic activity" evidence="1">
    <location>
        <position position="365"/>
    </location>
</feature>
<feature type="site" description="Important for catalytic activity" evidence="1">
    <location>
        <position position="382"/>
    </location>
</feature>
<feature type="modified residue" description="N-acetylserine" evidence="4">
    <location>
        <position position="2"/>
    </location>
</feature>
<feature type="modified residue" description="N6-acetyllysine" evidence="5">
    <location>
        <position position="52"/>
    </location>
</feature>
<feature type="modified residue" description="S-8alpha-FAD cysteine" evidence="3">
    <location>
        <position position="397"/>
    </location>
</feature>
<comment type="function">
    <text evidence="3">Catalyzes the oxidative deamination of primary and some secondary amines such as neurotransmitters, and exogenous amines including the tertiary amine, neurotoxin 1-methyl-4-phenyl-1,2,3,6-tetrahydropyridine (MPTP), with concomitant reduction of oxygen to hydrogen peroxide and participates in the metabolism of neuroactive and vasoactive amines in the central nervous system and peripheral tissues. Preferentially degrades benzylamine and phenylethylamine.</text>
</comment>
<comment type="catalytic activity">
    <reaction evidence="3">
        <text>a secondary aliphatic amine + O2 + H2O = a primary amine + an aldehyde + H2O2</text>
        <dbReference type="Rhea" id="RHEA:26414"/>
        <dbReference type="ChEBI" id="CHEBI:15377"/>
        <dbReference type="ChEBI" id="CHEBI:15379"/>
        <dbReference type="ChEBI" id="CHEBI:16240"/>
        <dbReference type="ChEBI" id="CHEBI:17478"/>
        <dbReference type="ChEBI" id="CHEBI:58855"/>
        <dbReference type="ChEBI" id="CHEBI:65296"/>
        <dbReference type="EC" id="1.4.3.4"/>
    </reaction>
</comment>
<comment type="catalytic activity">
    <reaction evidence="3">
        <text>(R)-adrenaline + O2 + H2O = (R)-3,4-dihydroxymandelaldehyde + methylamine + H2O2</text>
        <dbReference type="Rhea" id="RHEA:51168"/>
        <dbReference type="ChEBI" id="CHEBI:15377"/>
        <dbReference type="ChEBI" id="CHEBI:15379"/>
        <dbReference type="ChEBI" id="CHEBI:16240"/>
        <dbReference type="ChEBI" id="CHEBI:59338"/>
        <dbReference type="ChEBI" id="CHEBI:71406"/>
        <dbReference type="ChEBI" id="CHEBI:180943"/>
    </reaction>
</comment>
<comment type="catalytic activity">
    <reaction evidence="3">
        <text>a primary methyl amine + O2 + H2O = an aldehyde + H2O2 + NH4(+)</text>
        <dbReference type="Rhea" id="RHEA:16153"/>
        <dbReference type="ChEBI" id="CHEBI:15377"/>
        <dbReference type="ChEBI" id="CHEBI:15379"/>
        <dbReference type="ChEBI" id="CHEBI:16240"/>
        <dbReference type="ChEBI" id="CHEBI:17478"/>
        <dbReference type="ChEBI" id="CHEBI:28938"/>
        <dbReference type="ChEBI" id="CHEBI:228804"/>
        <dbReference type="EC" id="1.4.3.21"/>
    </reaction>
</comment>
<comment type="catalytic activity">
    <reaction evidence="3">
        <text>benzylamine + O2 + H2O = benzaldehyde + H2O2 + NH4(+)</text>
        <dbReference type="Rhea" id="RHEA:59424"/>
        <dbReference type="ChEBI" id="CHEBI:15377"/>
        <dbReference type="ChEBI" id="CHEBI:15379"/>
        <dbReference type="ChEBI" id="CHEBI:16240"/>
        <dbReference type="ChEBI" id="CHEBI:17169"/>
        <dbReference type="ChEBI" id="CHEBI:28938"/>
        <dbReference type="ChEBI" id="CHEBI:225238"/>
    </reaction>
    <physiologicalReaction direction="left-to-right" evidence="3">
        <dbReference type="Rhea" id="RHEA:59425"/>
    </physiologicalReaction>
</comment>
<comment type="catalytic activity">
    <reaction evidence="3">
        <text>dopamine + O2 + H2O = 3,4-dihydroxyphenylacetaldehyde + H2O2 + NH4(+)</text>
        <dbReference type="Rhea" id="RHEA:27946"/>
        <dbReference type="ChEBI" id="CHEBI:15377"/>
        <dbReference type="ChEBI" id="CHEBI:15379"/>
        <dbReference type="ChEBI" id="CHEBI:16240"/>
        <dbReference type="ChEBI" id="CHEBI:27978"/>
        <dbReference type="ChEBI" id="CHEBI:28938"/>
        <dbReference type="ChEBI" id="CHEBI:59905"/>
    </reaction>
</comment>
<comment type="catalytic activity">
    <reaction evidence="3">
        <text>tyramine + O2 + H2O = (4-hydroxyphenyl)acetaldehyde + H2O2 + NH4(+)</text>
        <dbReference type="Rhea" id="RHEA:30591"/>
        <dbReference type="ChEBI" id="CHEBI:15377"/>
        <dbReference type="ChEBI" id="CHEBI:15379"/>
        <dbReference type="ChEBI" id="CHEBI:15621"/>
        <dbReference type="ChEBI" id="CHEBI:16240"/>
        <dbReference type="ChEBI" id="CHEBI:28938"/>
        <dbReference type="ChEBI" id="CHEBI:327995"/>
    </reaction>
</comment>
<comment type="catalytic activity">
    <reaction evidence="3">
        <text>(R)-noradrenaline + O2 + H2O = (R)-3,4-dihydroxymandelaldehyde + H2O2 + NH4(+)</text>
        <dbReference type="Rhea" id="RHEA:69076"/>
        <dbReference type="ChEBI" id="CHEBI:15377"/>
        <dbReference type="ChEBI" id="CHEBI:15379"/>
        <dbReference type="ChEBI" id="CHEBI:16240"/>
        <dbReference type="ChEBI" id="CHEBI:28938"/>
        <dbReference type="ChEBI" id="CHEBI:72587"/>
        <dbReference type="ChEBI" id="CHEBI:180943"/>
    </reaction>
</comment>
<comment type="catalytic activity">
    <reaction evidence="3">
        <text>2-phenylethylamine + O2 + H2O = 2-phenylacetaldehyde + H2O2 + NH4(+)</text>
        <dbReference type="Rhea" id="RHEA:25265"/>
        <dbReference type="ChEBI" id="CHEBI:15377"/>
        <dbReference type="ChEBI" id="CHEBI:15379"/>
        <dbReference type="ChEBI" id="CHEBI:16240"/>
        <dbReference type="ChEBI" id="CHEBI:16424"/>
        <dbReference type="ChEBI" id="CHEBI:28938"/>
        <dbReference type="ChEBI" id="CHEBI:225237"/>
    </reaction>
</comment>
<comment type="catalytic activity">
    <reaction evidence="2">
        <text>N-acetylputrescine + O2 + H2O = 4-acetamidobutanal + H2O2 + NH4(+)</text>
        <dbReference type="Rhea" id="RHEA:70283"/>
        <dbReference type="ChEBI" id="CHEBI:7386"/>
        <dbReference type="ChEBI" id="CHEBI:15377"/>
        <dbReference type="ChEBI" id="CHEBI:15379"/>
        <dbReference type="ChEBI" id="CHEBI:16240"/>
        <dbReference type="ChEBI" id="CHEBI:28938"/>
        <dbReference type="ChEBI" id="CHEBI:58263"/>
    </reaction>
    <physiologicalReaction direction="left-to-right" evidence="2">
        <dbReference type="Rhea" id="RHEA:70284"/>
    </physiologicalReaction>
</comment>
<comment type="cofactor">
    <cofactor evidence="3">
        <name>FAD</name>
        <dbReference type="ChEBI" id="CHEBI:57692"/>
    </cofactor>
</comment>
<comment type="subunit">
    <text evidence="1">Monomer, homo- or heterodimer (containing two subunits of similar size). Each subunit contains a covalently bound flavin. Enzymatically active as monomer (By similarity).</text>
</comment>
<comment type="subcellular location">
    <subcellularLocation>
        <location evidence="1">Mitochondrion outer membrane</location>
        <topology evidence="1">Single-pass type IV membrane protein</topology>
        <orientation evidence="1">Cytoplasmic side</orientation>
    </subcellularLocation>
</comment>
<comment type="similarity">
    <text evidence="6">Belongs to the flavin monoamine oxidase family.</text>
</comment>
<evidence type="ECO:0000250" key="1"/>
<evidence type="ECO:0000250" key="2">
    <source>
        <dbReference type="UniProtKB" id="P19643"/>
    </source>
</evidence>
<evidence type="ECO:0000250" key="3">
    <source>
        <dbReference type="UniProtKB" id="P27338"/>
    </source>
</evidence>
<evidence type="ECO:0000250" key="4">
    <source>
        <dbReference type="UniProtKB" id="P56560"/>
    </source>
</evidence>
<evidence type="ECO:0000250" key="5">
    <source>
        <dbReference type="UniProtKB" id="Q8BW75"/>
    </source>
</evidence>
<evidence type="ECO:0000305" key="6"/>
<gene>
    <name evidence="3" type="primary">MAOB</name>
</gene>
<protein>
    <recommendedName>
        <fullName evidence="3">Amine oxidase [flavin-containing] B</fullName>
        <ecNumber evidence="3">1.4.3.21</ecNumber>
        <ecNumber evidence="3">1.4.3.4</ecNumber>
    </recommendedName>
    <alternativeName>
        <fullName>Monoamine oxidase type B</fullName>
        <shortName>MAO-B</shortName>
    </alternativeName>
</protein>
<reference key="1">
    <citation type="submission" date="2001-09" db="EMBL/GenBank/DDBJ databases">
        <authorList>
            <person name="Hashizume C."/>
            <person name="Mori Y."/>
        </authorList>
    </citation>
    <scope>NUCLEOTIDE SEQUENCE [MRNA]</scope>
    <source>
        <strain>Beagle</strain>
        <tissue>Brain</tissue>
    </source>
</reference>